<keyword id="KW-0997">Cell inner membrane</keyword>
<keyword id="KW-1003">Cell membrane</keyword>
<keyword id="KW-0472">Membrane</keyword>
<keyword id="KW-0520">NAD</keyword>
<keyword id="KW-0874">Quinone</keyword>
<keyword id="KW-1278">Translocase</keyword>
<keyword id="KW-0813">Transport</keyword>
<keyword id="KW-0830">Ubiquinone</keyword>
<evidence type="ECO:0000255" key="1">
    <source>
        <dbReference type="HAMAP-Rule" id="MF_01358"/>
    </source>
</evidence>
<name>NUOD_POLNS</name>
<accession>B1XUK1</accession>
<organism>
    <name type="scientific">Polynucleobacter necessarius subsp. necessarius (strain STIR1)</name>
    <dbReference type="NCBI Taxonomy" id="452638"/>
    <lineage>
        <taxon>Bacteria</taxon>
        <taxon>Pseudomonadati</taxon>
        <taxon>Pseudomonadota</taxon>
        <taxon>Betaproteobacteria</taxon>
        <taxon>Burkholderiales</taxon>
        <taxon>Burkholderiaceae</taxon>
        <taxon>Polynucleobacter</taxon>
    </lineage>
</organism>
<comment type="function">
    <text evidence="1">NDH-1 shuttles electrons from NADH, via FMN and iron-sulfur (Fe-S) centers, to quinones in the respiratory chain. The immediate electron acceptor for the enzyme in this species is believed to be ubiquinone. Couples the redox reaction to proton translocation (for every two electrons transferred, four hydrogen ions are translocated across the cytoplasmic membrane), and thus conserves the redox energy in a proton gradient.</text>
</comment>
<comment type="catalytic activity">
    <reaction evidence="1">
        <text>a quinone + NADH + 5 H(+)(in) = a quinol + NAD(+) + 4 H(+)(out)</text>
        <dbReference type="Rhea" id="RHEA:57888"/>
        <dbReference type="ChEBI" id="CHEBI:15378"/>
        <dbReference type="ChEBI" id="CHEBI:24646"/>
        <dbReference type="ChEBI" id="CHEBI:57540"/>
        <dbReference type="ChEBI" id="CHEBI:57945"/>
        <dbReference type="ChEBI" id="CHEBI:132124"/>
    </reaction>
</comment>
<comment type="subunit">
    <text evidence="1">NDH-1 is composed of 14 different subunits. Subunits NuoB, C, D, E, F, and G constitute the peripheral sector of the complex.</text>
</comment>
<comment type="subcellular location">
    <subcellularLocation>
        <location evidence="1">Cell inner membrane</location>
        <topology evidence="1">Peripheral membrane protein</topology>
        <orientation evidence="1">Cytoplasmic side</orientation>
    </subcellularLocation>
</comment>
<comment type="similarity">
    <text evidence="1">Belongs to the complex I 49 kDa subunit family.</text>
</comment>
<proteinExistence type="inferred from homology"/>
<reference key="1">
    <citation type="journal article" date="2013" name="Proc. Natl. Acad. Sci. U.S.A.">
        <title>Polynucleobacter necessarius, a model for genome reduction in both free-living and symbiotic bacteria.</title>
        <authorList>
            <person name="Boscaro V."/>
            <person name="Felletti M."/>
            <person name="Vannini C."/>
            <person name="Ackerman M.S."/>
            <person name="Chain P.S."/>
            <person name="Malfatti S."/>
            <person name="Vergez L.M."/>
            <person name="Shin M."/>
            <person name="Doak T.G."/>
            <person name="Lynch M."/>
            <person name="Petroni G."/>
        </authorList>
    </citation>
    <scope>NUCLEOTIDE SEQUENCE [LARGE SCALE GENOMIC DNA]</scope>
    <source>
        <strain>STIR1</strain>
    </source>
</reference>
<feature type="chain" id="PRO_0000371903" description="NADH-quinone oxidoreductase subunit D">
    <location>
        <begin position="1"/>
        <end position="417"/>
    </location>
</feature>
<sequence length="417" mass="47806">MAQIKNYTLNFGPQHPAAHGVLRLVLELDGEVIQRADPHIGLLHRATEKLAKTRTWIQNIPYMDRLDYVSMMSNEHAYVMAIEKLLQVDVPLRAQYIRVMYDELTRLLNHLLWIGCHGLDVGAMAVFLYAFRDREDIFDMYEAVSGARMHAAYYRPGGVYRDLPDQMAQYDKSKIRSASAVKRLNENRSGTLLDFIEQFANGFDANVDEYCNLLTDNRIWKQRLVNIGIVTPKRALQLGFTGPMLRGSGIEWDLRKKQPYEVYDRLDFDIPVGVNGDSYDRYLVRMEEMRQSNHIIKQCVAWLKANPGPVMSTNHKVSPPKRVDMKTNMEELIHHFKLFTEGIHVPDGEAYSAVEHPKGEFGIYLISDGANKPYRMKIRAPGFVHLSSMDEMSRGHMLADAVTIIGTQDIVFGEIDR</sequence>
<dbReference type="EC" id="7.1.1.-" evidence="1"/>
<dbReference type="EMBL" id="CP001010">
    <property type="protein sequence ID" value="ACB44028.1"/>
    <property type="molecule type" value="Genomic_DNA"/>
</dbReference>
<dbReference type="SMR" id="B1XUK1"/>
<dbReference type="STRING" id="452638.Pnec_0824"/>
<dbReference type="KEGG" id="pne:Pnec_0824"/>
<dbReference type="eggNOG" id="COG0649">
    <property type="taxonomic scope" value="Bacteria"/>
</dbReference>
<dbReference type="HOGENOM" id="CLU_015134_1_1_4"/>
<dbReference type="OrthoDB" id="9801496at2"/>
<dbReference type="GO" id="GO:0005886">
    <property type="term" value="C:plasma membrane"/>
    <property type="evidence" value="ECO:0007669"/>
    <property type="project" value="UniProtKB-SubCell"/>
</dbReference>
<dbReference type="GO" id="GO:0051287">
    <property type="term" value="F:NAD binding"/>
    <property type="evidence" value="ECO:0007669"/>
    <property type="project" value="InterPro"/>
</dbReference>
<dbReference type="GO" id="GO:0050136">
    <property type="term" value="F:NADH:ubiquinone reductase (non-electrogenic) activity"/>
    <property type="evidence" value="ECO:0007669"/>
    <property type="project" value="UniProtKB-UniRule"/>
</dbReference>
<dbReference type="GO" id="GO:0048038">
    <property type="term" value="F:quinone binding"/>
    <property type="evidence" value="ECO:0007669"/>
    <property type="project" value="UniProtKB-KW"/>
</dbReference>
<dbReference type="FunFam" id="1.10.645.10:FF:000005">
    <property type="entry name" value="NADH-quinone oxidoreductase subunit D"/>
    <property type="match status" value="1"/>
</dbReference>
<dbReference type="Gene3D" id="1.10.645.10">
    <property type="entry name" value="Cytochrome-c3 Hydrogenase, chain B"/>
    <property type="match status" value="1"/>
</dbReference>
<dbReference type="HAMAP" id="MF_01358">
    <property type="entry name" value="NDH1_NuoD"/>
    <property type="match status" value="1"/>
</dbReference>
<dbReference type="InterPro" id="IPR001135">
    <property type="entry name" value="NADH_Q_OxRdtase_suD"/>
</dbReference>
<dbReference type="InterPro" id="IPR022885">
    <property type="entry name" value="NDH1_su_D/H"/>
</dbReference>
<dbReference type="InterPro" id="IPR029014">
    <property type="entry name" value="NiFe-Hase_large"/>
</dbReference>
<dbReference type="NCBIfam" id="TIGR01962">
    <property type="entry name" value="NuoD"/>
    <property type="match status" value="1"/>
</dbReference>
<dbReference type="NCBIfam" id="NF004739">
    <property type="entry name" value="PRK06075.1"/>
    <property type="match status" value="1"/>
</dbReference>
<dbReference type="PANTHER" id="PTHR11993:SF10">
    <property type="entry name" value="NADH DEHYDROGENASE [UBIQUINONE] IRON-SULFUR PROTEIN 2, MITOCHONDRIAL"/>
    <property type="match status" value="1"/>
</dbReference>
<dbReference type="PANTHER" id="PTHR11993">
    <property type="entry name" value="NADH-UBIQUINONE OXIDOREDUCTASE 49 KDA SUBUNIT"/>
    <property type="match status" value="1"/>
</dbReference>
<dbReference type="Pfam" id="PF00346">
    <property type="entry name" value="Complex1_49kDa"/>
    <property type="match status" value="2"/>
</dbReference>
<dbReference type="SUPFAM" id="SSF56762">
    <property type="entry name" value="HydB/Nqo4-like"/>
    <property type="match status" value="1"/>
</dbReference>
<gene>
    <name evidence="1" type="primary">nuoD</name>
    <name type="ordered locus">Pnec_0824</name>
</gene>
<protein>
    <recommendedName>
        <fullName evidence="1">NADH-quinone oxidoreductase subunit D</fullName>
        <ecNumber evidence="1">7.1.1.-</ecNumber>
    </recommendedName>
    <alternativeName>
        <fullName evidence="1">NADH dehydrogenase I subunit D</fullName>
    </alternativeName>
    <alternativeName>
        <fullName evidence="1">NDH-1 subunit D</fullName>
    </alternativeName>
</protein>